<evidence type="ECO:0000250" key="1">
    <source>
        <dbReference type="UniProtKB" id="P00950"/>
    </source>
</evidence>
<evidence type="ECO:0000269" key="2">
    <source>
    </source>
</evidence>
<evidence type="ECO:0000269" key="3">
    <source>
    </source>
</evidence>
<evidence type="ECO:0000269" key="4">
    <source>
    </source>
</evidence>
<evidence type="ECO:0000305" key="5"/>
<dbReference type="EC" id="5.4.2.11"/>
<dbReference type="EMBL" id="Z48432">
    <property type="protein sequence ID" value="CAA88338.1"/>
    <property type="molecule type" value="Genomic_DNA"/>
</dbReference>
<dbReference type="EMBL" id="Z74069">
    <property type="protein sequence ID" value="CAA98580.1"/>
    <property type="molecule type" value="Genomic_DNA"/>
</dbReference>
<dbReference type="EMBL" id="AY692876">
    <property type="protein sequence ID" value="AAT92895.1"/>
    <property type="molecule type" value="Genomic_DNA"/>
</dbReference>
<dbReference type="EMBL" id="BK006938">
    <property type="protein sequence ID" value="DAA11829.1"/>
    <property type="molecule type" value="Genomic_DNA"/>
</dbReference>
<dbReference type="PIR" id="S52498">
    <property type="entry name" value="S52498"/>
</dbReference>
<dbReference type="RefSeq" id="NP_010263.1">
    <property type="nucleotide sequence ID" value="NM_001180080.1"/>
</dbReference>
<dbReference type="SMR" id="Q12008"/>
<dbReference type="BioGRID" id="32034">
    <property type="interactions" value="48"/>
</dbReference>
<dbReference type="FunCoup" id="Q12008">
    <property type="interactions" value="708"/>
</dbReference>
<dbReference type="IntAct" id="Q12008">
    <property type="interactions" value="4"/>
</dbReference>
<dbReference type="MINT" id="Q12008"/>
<dbReference type="STRING" id="4932.YDL021W"/>
<dbReference type="iPTMnet" id="Q12008"/>
<dbReference type="PaxDb" id="4932-YDL021W"/>
<dbReference type="PeptideAtlas" id="Q12008"/>
<dbReference type="TopDownProteomics" id="Q12008"/>
<dbReference type="EnsemblFungi" id="YDL021W_mRNA">
    <property type="protein sequence ID" value="YDL021W"/>
    <property type="gene ID" value="YDL021W"/>
</dbReference>
<dbReference type="GeneID" id="851541"/>
<dbReference type="KEGG" id="sce:YDL021W"/>
<dbReference type="AGR" id="SGD:S000002179"/>
<dbReference type="SGD" id="S000002179">
    <property type="gene designation" value="GPM2"/>
</dbReference>
<dbReference type="VEuPathDB" id="FungiDB:YDL021W"/>
<dbReference type="eggNOG" id="KOG0235">
    <property type="taxonomic scope" value="Eukaryota"/>
</dbReference>
<dbReference type="GeneTree" id="ENSGT00950000182926"/>
<dbReference type="HOGENOM" id="CLU_033323_1_6_1"/>
<dbReference type="InParanoid" id="Q12008"/>
<dbReference type="OMA" id="MVFFKFL"/>
<dbReference type="OrthoDB" id="354304at2759"/>
<dbReference type="BioCyc" id="YEAST:G3O-29450-MONOMER"/>
<dbReference type="UniPathway" id="UPA00109">
    <property type="reaction ID" value="UER00186"/>
</dbReference>
<dbReference type="BioGRID-ORCS" id="851541">
    <property type="hits" value="0 hits in 10 CRISPR screens"/>
</dbReference>
<dbReference type="PRO" id="PR:Q12008"/>
<dbReference type="Proteomes" id="UP000002311">
    <property type="component" value="Chromosome IV"/>
</dbReference>
<dbReference type="RNAct" id="Q12008">
    <property type="molecule type" value="protein"/>
</dbReference>
<dbReference type="GO" id="GO:0005737">
    <property type="term" value="C:cytoplasm"/>
    <property type="evidence" value="ECO:0000314"/>
    <property type="project" value="SGD"/>
</dbReference>
<dbReference type="GO" id="GO:0004619">
    <property type="term" value="F:phosphoglycerate mutase activity"/>
    <property type="evidence" value="ECO:0007669"/>
    <property type="project" value="UniProtKB-EC"/>
</dbReference>
<dbReference type="GO" id="GO:0006096">
    <property type="term" value="P:glycolytic process"/>
    <property type="evidence" value="ECO:0007669"/>
    <property type="project" value="UniProtKB-UniPathway"/>
</dbReference>
<dbReference type="CDD" id="cd07067">
    <property type="entry name" value="HP_PGM_like"/>
    <property type="match status" value="1"/>
</dbReference>
<dbReference type="FunFam" id="3.40.50.1240:FF:000040">
    <property type="entry name" value="Phosphoglycerate mutase"/>
    <property type="match status" value="1"/>
</dbReference>
<dbReference type="Gene3D" id="3.40.50.1240">
    <property type="entry name" value="Phosphoglycerate mutase-like"/>
    <property type="match status" value="1"/>
</dbReference>
<dbReference type="HAMAP" id="MF_01039">
    <property type="entry name" value="PGAM_GpmA"/>
    <property type="match status" value="1"/>
</dbReference>
<dbReference type="InterPro" id="IPR013078">
    <property type="entry name" value="His_Pase_superF_clade-1"/>
</dbReference>
<dbReference type="InterPro" id="IPR029033">
    <property type="entry name" value="His_PPase_superfam"/>
</dbReference>
<dbReference type="InterPro" id="IPR001345">
    <property type="entry name" value="PG/BPGM_mutase_AS"/>
</dbReference>
<dbReference type="InterPro" id="IPR005952">
    <property type="entry name" value="Phosphogly_mut1"/>
</dbReference>
<dbReference type="NCBIfam" id="TIGR01258">
    <property type="entry name" value="pgm_1"/>
    <property type="match status" value="1"/>
</dbReference>
<dbReference type="PANTHER" id="PTHR11931">
    <property type="entry name" value="PHOSPHOGLYCERATE MUTASE"/>
    <property type="match status" value="1"/>
</dbReference>
<dbReference type="Pfam" id="PF00300">
    <property type="entry name" value="His_Phos_1"/>
    <property type="match status" value="2"/>
</dbReference>
<dbReference type="PIRSF" id="PIRSF000709">
    <property type="entry name" value="6PFK_2-Ptase"/>
    <property type="match status" value="1"/>
</dbReference>
<dbReference type="SMART" id="SM00855">
    <property type="entry name" value="PGAM"/>
    <property type="match status" value="1"/>
</dbReference>
<dbReference type="SUPFAM" id="SSF53254">
    <property type="entry name" value="Phosphoglycerate mutase-like"/>
    <property type="match status" value="1"/>
</dbReference>
<dbReference type="PROSITE" id="PS00175">
    <property type="entry name" value="PG_MUTASE"/>
    <property type="match status" value="1"/>
</dbReference>
<organism>
    <name type="scientific">Saccharomyces cerevisiae (strain ATCC 204508 / S288c)</name>
    <name type="common">Baker's yeast</name>
    <dbReference type="NCBI Taxonomy" id="559292"/>
    <lineage>
        <taxon>Eukaryota</taxon>
        <taxon>Fungi</taxon>
        <taxon>Dikarya</taxon>
        <taxon>Ascomycota</taxon>
        <taxon>Saccharomycotina</taxon>
        <taxon>Saccharomycetes</taxon>
        <taxon>Saccharomycetales</taxon>
        <taxon>Saccharomycetaceae</taxon>
        <taxon>Saccharomyces</taxon>
    </lineage>
</organism>
<reference key="1">
    <citation type="journal article" date="1997" name="Nature">
        <title>The nucleotide sequence of Saccharomyces cerevisiae chromosome IV.</title>
        <authorList>
            <person name="Jacq C."/>
            <person name="Alt-Moerbe J."/>
            <person name="Andre B."/>
            <person name="Arnold W."/>
            <person name="Bahr A."/>
            <person name="Ballesta J.P.G."/>
            <person name="Bargues M."/>
            <person name="Baron L."/>
            <person name="Becker A."/>
            <person name="Biteau N."/>
            <person name="Bloecker H."/>
            <person name="Blugeon C."/>
            <person name="Boskovic J."/>
            <person name="Brandt P."/>
            <person name="Brueckner M."/>
            <person name="Buitrago M.J."/>
            <person name="Coster F."/>
            <person name="Delaveau T."/>
            <person name="del Rey F."/>
            <person name="Dujon B."/>
            <person name="Eide L.G."/>
            <person name="Garcia-Cantalejo J.M."/>
            <person name="Goffeau A."/>
            <person name="Gomez-Peris A."/>
            <person name="Granotier C."/>
            <person name="Hanemann V."/>
            <person name="Hankeln T."/>
            <person name="Hoheisel J.D."/>
            <person name="Jaeger W."/>
            <person name="Jimenez A."/>
            <person name="Jonniaux J.-L."/>
            <person name="Kraemer C."/>
            <person name="Kuester H."/>
            <person name="Laamanen P."/>
            <person name="Legros Y."/>
            <person name="Louis E.J."/>
            <person name="Moeller-Rieker S."/>
            <person name="Monnet A."/>
            <person name="Moro M."/>
            <person name="Mueller-Auer S."/>
            <person name="Nussbaumer B."/>
            <person name="Paricio N."/>
            <person name="Paulin L."/>
            <person name="Perea J."/>
            <person name="Perez-Alonso M."/>
            <person name="Perez-Ortin J.E."/>
            <person name="Pohl T.M."/>
            <person name="Prydz H."/>
            <person name="Purnelle B."/>
            <person name="Rasmussen S.W."/>
            <person name="Remacha M.A."/>
            <person name="Revuelta J.L."/>
            <person name="Rieger M."/>
            <person name="Salom D."/>
            <person name="Saluz H.P."/>
            <person name="Saiz J.E."/>
            <person name="Saren A.-M."/>
            <person name="Schaefer M."/>
            <person name="Scharfe M."/>
            <person name="Schmidt E.R."/>
            <person name="Schneider C."/>
            <person name="Scholler P."/>
            <person name="Schwarz S."/>
            <person name="Soler-Mira A."/>
            <person name="Urrestarazu L.A."/>
            <person name="Verhasselt P."/>
            <person name="Vissers S."/>
            <person name="Voet M."/>
            <person name="Volckaert G."/>
            <person name="Wagner G."/>
            <person name="Wambutt R."/>
            <person name="Wedler E."/>
            <person name="Wedler H."/>
            <person name="Woelfl S."/>
            <person name="Harris D.E."/>
            <person name="Bowman S."/>
            <person name="Brown D."/>
            <person name="Churcher C.M."/>
            <person name="Connor R."/>
            <person name="Dedman K."/>
            <person name="Gentles S."/>
            <person name="Hamlin N."/>
            <person name="Hunt S."/>
            <person name="Jones L."/>
            <person name="McDonald S."/>
            <person name="Murphy L.D."/>
            <person name="Niblett D."/>
            <person name="Odell C."/>
            <person name="Oliver K."/>
            <person name="Rajandream M.A."/>
            <person name="Richards C."/>
            <person name="Shore L."/>
            <person name="Walsh S.V."/>
            <person name="Barrell B.G."/>
            <person name="Dietrich F.S."/>
            <person name="Mulligan J.T."/>
            <person name="Allen E."/>
            <person name="Araujo R."/>
            <person name="Aviles E."/>
            <person name="Berno A."/>
            <person name="Carpenter J."/>
            <person name="Chen E."/>
            <person name="Cherry J.M."/>
            <person name="Chung E."/>
            <person name="Duncan M."/>
            <person name="Hunicke-Smith S."/>
            <person name="Hyman R.W."/>
            <person name="Komp C."/>
            <person name="Lashkari D."/>
            <person name="Lew H."/>
            <person name="Lin D."/>
            <person name="Mosedale D."/>
            <person name="Nakahara K."/>
            <person name="Namath A."/>
            <person name="Oefner P."/>
            <person name="Oh C."/>
            <person name="Petel F.X."/>
            <person name="Roberts D."/>
            <person name="Schramm S."/>
            <person name="Schroeder M."/>
            <person name="Shogren T."/>
            <person name="Shroff N."/>
            <person name="Winant A."/>
            <person name="Yelton M.A."/>
            <person name="Botstein D."/>
            <person name="Davis R.W."/>
            <person name="Johnston M."/>
            <person name="Andrews S."/>
            <person name="Brinkman R."/>
            <person name="Cooper J."/>
            <person name="Ding H."/>
            <person name="Du Z."/>
            <person name="Favello A."/>
            <person name="Fulton L."/>
            <person name="Gattung S."/>
            <person name="Greco T."/>
            <person name="Hallsworth K."/>
            <person name="Hawkins J."/>
            <person name="Hillier L.W."/>
            <person name="Jier M."/>
            <person name="Johnson D."/>
            <person name="Johnston L."/>
            <person name="Kirsten J."/>
            <person name="Kucaba T."/>
            <person name="Langston Y."/>
            <person name="Latreille P."/>
            <person name="Le T."/>
            <person name="Mardis E."/>
            <person name="Menezes S."/>
            <person name="Miller N."/>
            <person name="Nhan M."/>
            <person name="Pauley A."/>
            <person name="Peluso D."/>
            <person name="Rifkin L."/>
            <person name="Riles L."/>
            <person name="Taich A."/>
            <person name="Trevaskis E."/>
            <person name="Vignati D."/>
            <person name="Wilcox L."/>
            <person name="Wohldman P."/>
            <person name="Vaudin M."/>
            <person name="Wilson R."/>
            <person name="Waterston R."/>
            <person name="Albermann K."/>
            <person name="Hani J."/>
            <person name="Heumann K."/>
            <person name="Kleine K."/>
            <person name="Mewes H.-W."/>
            <person name="Zollner A."/>
            <person name="Zaccaria P."/>
        </authorList>
    </citation>
    <scope>NUCLEOTIDE SEQUENCE [LARGE SCALE GENOMIC DNA]</scope>
    <source>
        <strain>ATCC 204508 / S288c</strain>
    </source>
</reference>
<reference key="2">
    <citation type="journal article" date="2014" name="G3 (Bethesda)">
        <title>The reference genome sequence of Saccharomyces cerevisiae: Then and now.</title>
        <authorList>
            <person name="Engel S.R."/>
            <person name="Dietrich F.S."/>
            <person name="Fisk D.G."/>
            <person name="Binkley G."/>
            <person name="Balakrishnan R."/>
            <person name="Costanzo M.C."/>
            <person name="Dwight S.S."/>
            <person name="Hitz B.C."/>
            <person name="Karra K."/>
            <person name="Nash R.S."/>
            <person name="Weng S."/>
            <person name="Wong E.D."/>
            <person name="Lloyd P."/>
            <person name="Skrzypek M.S."/>
            <person name="Miyasato S.R."/>
            <person name="Simison M."/>
            <person name="Cherry J.M."/>
        </authorList>
    </citation>
    <scope>GENOME REANNOTATION</scope>
    <source>
        <strain>ATCC 204508 / S288c</strain>
    </source>
</reference>
<reference key="3">
    <citation type="journal article" date="2007" name="Genome Res.">
        <title>Approaching a complete repository of sequence-verified protein-encoding clones for Saccharomyces cerevisiae.</title>
        <authorList>
            <person name="Hu Y."/>
            <person name="Rolfs A."/>
            <person name="Bhullar B."/>
            <person name="Murthy T.V.S."/>
            <person name="Zhu C."/>
            <person name="Berger M.F."/>
            <person name="Camargo A.A."/>
            <person name="Kelley F."/>
            <person name="McCarron S."/>
            <person name="Jepson D."/>
            <person name="Richardson A."/>
            <person name="Raphael J."/>
            <person name="Moreira D."/>
            <person name="Taycher E."/>
            <person name="Zuo D."/>
            <person name="Mohr S."/>
            <person name="Kane M.F."/>
            <person name="Williamson J."/>
            <person name="Simpson A.J.G."/>
            <person name="Bulyk M.L."/>
            <person name="Harlow E."/>
            <person name="Marsischky G."/>
            <person name="Kolodner R.D."/>
            <person name="LaBaer J."/>
        </authorList>
    </citation>
    <scope>NUCLEOTIDE SEQUENCE [GENOMIC DNA]</scope>
    <source>
        <strain>ATCC 204508 / S288c</strain>
    </source>
</reference>
<reference key="4">
    <citation type="journal article" date="1998" name="Yeast">
        <title>Investigation of two yeast genes encoding putative isoenzymes of phosphoglycerate mutase.</title>
        <authorList>
            <person name="Heinisch J.J."/>
            <person name="Mueller S."/>
            <person name="Schlueter E."/>
            <person name="Jacoby J."/>
            <person name="Rodicio R."/>
        </authorList>
    </citation>
    <scope>CHARACTERIZATION</scope>
</reference>
<reference key="5">
    <citation type="journal article" date="2001" name="Biochemistry">
        <title>Yeast mitochondrial dehydrogenases are associated in a supramolecular complex.</title>
        <authorList>
            <person name="Grandier-Vazeille X."/>
            <person name="Bathany K."/>
            <person name="Chaignepain S."/>
            <person name="Camougrand N."/>
            <person name="Manon S."/>
            <person name="Schmitter J.-M."/>
        </authorList>
    </citation>
    <scope>SUBCELLULAR LOCATION</scope>
</reference>
<reference key="6">
    <citation type="journal article" date="2003" name="Nature">
        <title>Global analysis of protein expression in yeast.</title>
        <authorList>
            <person name="Ghaemmaghami S."/>
            <person name="Huh W.-K."/>
            <person name="Bower K."/>
            <person name="Howson R.W."/>
            <person name="Belle A."/>
            <person name="Dephoure N."/>
            <person name="O'Shea E.K."/>
            <person name="Weissman J.S."/>
        </authorList>
    </citation>
    <scope>LEVEL OF PROTEIN EXPRESSION [LARGE SCALE ANALYSIS]</scope>
</reference>
<reference key="7">
    <citation type="journal article" date="2013" name="PLoS ONE">
        <title>Transcriptional response to deletion of the phosphatidylserine decarboxylase Psd1p in the yeast Saccharomyces cerevisiae.</title>
        <authorList>
            <person name="Gsell M."/>
            <person name="Mascher G."/>
            <person name="Schuiki I."/>
            <person name="Ploier B."/>
            <person name="Hrastnik C."/>
            <person name="Daum G."/>
        </authorList>
    </citation>
    <scope>SUBCELLULAR LOCATION</scope>
    <scope>DISRUPTION PHENOTYPE</scope>
</reference>
<keyword id="KW-0963">Cytoplasm</keyword>
<keyword id="KW-0324">Glycolysis</keyword>
<keyword id="KW-0413">Isomerase</keyword>
<keyword id="KW-1185">Reference proteome</keyword>
<feature type="chain" id="PRO_0000179840" description="Phosphoglycerate mutase 2">
    <location>
        <begin position="1"/>
        <end position="311"/>
    </location>
</feature>
<feature type="active site" description="Tele-phosphohistidine intermediate" evidence="1">
    <location>
        <position position="17"/>
    </location>
</feature>
<feature type="active site" description="Proton donor/acceptor" evidence="1">
    <location>
        <position position="126"/>
    </location>
</feature>
<feature type="binding site" evidence="1">
    <location>
        <begin position="16"/>
        <end position="23"/>
    </location>
    <ligand>
        <name>substrate</name>
    </ligand>
</feature>
<feature type="binding site" evidence="1">
    <location>
        <begin position="29"/>
        <end position="30"/>
    </location>
    <ligand>
        <name>substrate</name>
    </ligand>
</feature>
<feature type="binding site" evidence="1">
    <location>
        <position position="73"/>
    </location>
    <ligand>
        <name>substrate</name>
    </ligand>
</feature>
<feature type="binding site" evidence="1">
    <location>
        <begin position="126"/>
        <end position="129"/>
    </location>
    <ligand>
        <name>substrate</name>
    </ligand>
</feature>
<feature type="binding site" evidence="1">
    <location>
        <position position="137"/>
    </location>
    <ligand>
        <name>substrate</name>
    </ligand>
</feature>
<feature type="binding site" evidence="1">
    <location>
        <begin position="153"/>
        <end position="154"/>
    </location>
    <ligand>
        <name>substrate</name>
    </ligand>
</feature>
<feature type="binding site" evidence="1">
    <location>
        <begin position="243"/>
        <end position="244"/>
    </location>
    <ligand>
        <name>substrate</name>
    </ligand>
</feature>
<feature type="site" description="Transition state stabilizer" evidence="1">
    <location>
        <position position="242"/>
    </location>
</feature>
<protein>
    <recommendedName>
        <fullName>Phosphoglycerate mutase 2</fullName>
        <shortName>PGAM 2</shortName>
        <ecNumber>5.4.2.11</ecNumber>
    </recommendedName>
    <alternativeName>
        <fullName>BPG-dependent PGAM 2</fullName>
    </alternativeName>
    <alternativeName>
        <fullName>MPGM 2</fullName>
    </alternativeName>
    <alternativeName>
        <fullName>Phosphoglyceromutase 2</fullName>
    </alternativeName>
</protein>
<gene>
    <name type="primary">GPM2</name>
    <name type="ordered locus">YDL021W</name>
    <name type="ORF">D2835</name>
</gene>
<proteinExistence type="evidence at protein level"/>
<name>PMG2_YEAST</name>
<sequence>MTASTPSNVMTLFLLRHGQSELNHENIFCGWIDAKLTEKGKEQARHSAELIEQYCKANNLRLPQIGYTSRLIRTQQTIETMCEEFKLKPQLQVVYDFNKIKLGDEFGSDDKDNMKIPILQTWRLNERHYGSWQGQRKPNVLKEYGKDKYMFIRRDYEGKPPPVDLDREMIQQENEKGSSTGYEFKEPNRQIKYELECSNHDIVLPDSESLREVVYRLNPFLQNVILKLANQYDESSCLIVGHGSSVRSLLKILEGISDDDIKNVDIPNGIPLVVELDKNNGLKFIRKFYLDPESAKINAEKVRNEGFIKNP</sequence>
<comment type="function">
    <text>Could be non-functional.</text>
</comment>
<comment type="catalytic activity">
    <reaction>
        <text>(2R)-2-phosphoglycerate = (2R)-3-phosphoglycerate</text>
        <dbReference type="Rhea" id="RHEA:15901"/>
        <dbReference type="ChEBI" id="CHEBI:58272"/>
        <dbReference type="ChEBI" id="CHEBI:58289"/>
        <dbReference type="EC" id="5.4.2.11"/>
    </reaction>
</comment>
<comment type="pathway">
    <text>Carbohydrate degradation; glycolysis; pyruvate from D-glyceraldehyde 3-phosphate: step 3/5.</text>
</comment>
<comment type="subcellular location">
    <subcellularLocation>
        <location evidence="2 4">Cytoplasm</location>
    </subcellularLocation>
</comment>
<comment type="disruption phenotype">
    <text evidence="4">Sensitive to sodium dodecyl sulfate.</text>
</comment>
<comment type="miscellaneous">
    <text evidence="3">Present with 2020 molecules/cell in log phase SD medium.</text>
</comment>
<comment type="similarity">
    <text evidence="5">Belongs to the phosphoglycerate mutase family. BPG-dependent PGAM subfamily.</text>
</comment>
<accession>Q12008</accession>
<accession>D6VRW9</accession>